<gene>
    <name evidence="1" type="primary">ndhC</name>
</gene>
<protein>
    <recommendedName>
        <fullName evidence="1">NAD(P)H-quinone oxidoreductase subunit 3, chloroplastic</fullName>
        <ecNumber evidence="1">7.1.1.-</ecNumber>
    </recommendedName>
    <alternativeName>
        <fullName evidence="1">NAD(P)H dehydrogenase subunit 3</fullName>
    </alternativeName>
    <alternativeName>
        <fullName evidence="1">NADH-plastoquinone oxidoreductase subunit 3</fullName>
    </alternativeName>
</protein>
<sequence length="120" mass="13797">MFLLYEYDIFWAFLMISSVIPILAFLISGVLAPISEGPEKLSSYESGIEPIGDAWIQFRIRYYMFALVFVVFDVETVFLYPWAVSFDILGVYVFIEALIFVLIPVVGSVYAWRKGALEWS</sequence>
<name>NU3C_NYMAL</name>
<feature type="chain" id="PRO_0000362856" description="NAD(P)H-quinone oxidoreductase subunit 3, chloroplastic">
    <location>
        <begin position="1"/>
        <end position="120"/>
    </location>
</feature>
<feature type="transmembrane region" description="Helical" evidence="1">
    <location>
        <begin position="9"/>
        <end position="29"/>
    </location>
</feature>
<feature type="transmembrane region" description="Helical" evidence="1">
    <location>
        <begin position="64"/>
        <end position="84"/>
    </location>
</feature>
<feature type="transmembrane region" description="Helical" evidence="1">
    <location>
        <begin position="88"/>
        <end position="108"/>
    </location>
</feature>
<organism>
    <name type="scientific">Nymphaea alba</name>
    <name type="common">White water-lily</name>
    <name type="synonym">Castalia alba</name>
    <dbReference type="NCBI Taxonomy" id="34301"/>
    <lineage>
        <taxon>Eukaryota</taxon>
        <taxon>Viridiplantae</taxon>
        <taxon>Streptophyta</taxon>
        <taxon>Embryophyta</taxon>
        <taxon>Tracheophyta</taxon>
        <taxon>Spermatophyta</taxon>
        <taxon>Magnoliopsida</taxon>
        <taxon>Nymphaeales</taxon>
        <taxon>Nymphaeaceae</taxon>
        <taxon>Nymphaea</taxon>
    </lineage>
</organism>
<accession>Q6EW43</accession>
<dbReference type="EC" id="7.1.1.-" evidence="1"/>
<dbReference type="EMBL" id="AJ627251">
    <property type="protein sequence ID" value="CAF28598.1"/>
    <property type="molecule type" value="Genomic_DNA"/>
</dbReference>
<dbReference type="RefSeq" id="YP_053160.1">
    <property type="nucleotide sequence ID" value="NC_006050.1"/>
</dbReference>
<dbReference type="SMR" id="Q6EW43"/>
<dbReference type="GeneID" id="2896161"/>
<dbReference type="GO" id="GO:0009535">
    <property type="term" value="C:chloroplast thylakoid membrane"/>
    <property type="evidence" value="ECO:0007669"/>
    <property type="project" value="UniProtKB-SubCell"/>
</dbReference>
<dbReference type="GO" id="GO:0030964">
    <property type="term" value="C:NADH dehydrogenase complex"/>
    <property type="evidence" value="ECO:0007669"/>
    <property type="project" value="TreeGrafter"/>
</dbReference>
<dbReference type="GO" id="GO:0008137">
    <property type="term" value="F:NADH dehydrogenase (ubiquinone) activity"/>
    <property type="evidence" value="ECO:0007669"/>
    <property type="project" value="InterPro"/>
</dbReference>
<dbReference type="GO" id="GO:0048038">
    <property type="term" value="F:quinone binding"/>
    <property type="evidence" value="ECO:0007669"/>
    <property type="project" value="UniProtKB-KW"/>
</dbReference>
<dbReference type="GO" id="GO:0019684">
    <property type="term" value="P:photosynthesis, light reaction"/>
    <property type="evidence" value="ECO:0007669"/>
    <property type="project" value="UniProtKB-UniRule"/>
</dbReference>
<dbReference type="FunFam" id="1.20.58.1610:FF:000001">
    <property type="entry name" value="NAD(P)H-quinone oxidoreductase subunit 3, chloroplastic"/>
    <property type="match status" value="1"/>
</dbReference>
<dbReference type="Gene3D" id="1.20.58.1610">
    <property type="entry name" value="NADH:ubiquinone/plastoquinone oxidoreductase, chain 3"/>
    <property type="match status" value="1"/>
</dbReference>
<dbReference type="HAMAP" id="MF_01394">
    <property type="entry name" value="NDH1_NuoA"/>
    <property type="match status" value="1"/>
</dbReference>
<dbReference type="InterPro" id="IPR023043">
    <property type="entry name" value="NAD(P)H_OxRDtase_bac/plastid"/>
</dbReference>
<dbReference type="InterPro" id="IPR000440">
    <property type="entry name" value="NADH_UbQ/plastoQ_OxRdtase_su3"/>
</dbReference>
<dbReference type="InterPro" id="IPR038430">
    <property type="entry name" value="NDAH_ubi_oxred_su3_sf"/>
</dbReference>
<dbReference type="PANTHER" id="PTHR11058">
    <property type="entry name" value="NADH-UBIQUINONE OXIDOREDUCTASE CHAIN 3"/>
    <property type="match status" value="1"/>
</dbReference>
<dbReference type="PANTHER" id="PTHR11058:SF9">
    <property type="entry name" value="NADH-UBIQUINONE OXIDOREDUCTASE CHAIN 3"/>
    <property type="match status" value="1"/>
</dbReference>
<dbReference type="Pfam" id="PF00507">
    <property type="entry name" value="Oxidored_q4"/>
    <property type="match status" value="1"/>
</dbReference>
<geneLocation type="chloroplast"/>
<reference key="1">
    <citation type="journal article" date="2004" name="Mol. Biol. Evol.">
        <title>The chloroplast genome of Nymphaea alba: whole-genome analyses and the problem of identifying the most basal angiosperm.</title>
        <authorList>
            <person name="Goremykin V.V."/>
            <person name="Hirsch-Ernst K.I."/>
            <person name="Woelfl S."/>
            <person name="Hellwig F.H."/>
        </authorList>
    </citation>
    <scope>NUCLEOTIDE SEQUENCE [LARGE SCALE GENOMIC DNA]</scope>
</reference>
<comment type="function">
    <text evidence="1">NDH shuttles electrons from NAD(P)H:plastoquinone, via FMN and iron-sulfur (Fe-S) centers, to quinones in the photosynthetic chain and possibly in a chloroplast respiratory chain. The immediate electron acceptor for the enzyme in this species is believed to be plastoquinone. Couples the redox reaction to proton translocation, and thus conserves the redox energy in a proton gradient.</text>
</comment>
<comment type="catalytic activity">
    <reaction evidence="1">
        <text>a plastoquinone + NADH + (n+1) H(+)(in) = a plastoquinol + NAD(+) + n H(+)(out)</text>
        <dbReference type="Rhea" id="RHEA:42608"/>
        <dbReference type="Rhea" id="RHEA-COMP:9561"/>
        <dbReference type="Rhea" id="RHEA-COMP:9562"/>
        <dbReference type="ChEBI" id="CHEBI:15378"/>
        <dbReference type="ChEBI" id="CHEBI:17757"/>
        <dbReference type="ChEBI" id="CHEBI:57540"/>
        <dbReference type="ChEBI" id="CHEBI:57945"/>
        <dbReference type="ChEBI" id="CHEBI:62192"/>
    </reaction>
</comment>
<comment type="catalytic activity">
    <reaction evidence="1">
        <text>a plastoquinone + NADPH + (n+1) H(+)(in) = a plastoquinol + NADP(+) + n H(+)(out)</text>
        <dbReference type="Rhea" id="RHEA:42612"/>
        <dbReference type="Rhea" id="RHEA-COMP:9561"/>
        <dbReference type="Rhea" id="RHEA-COMP:9562"/>
        <dbReference type="ChEBI" id="CHEBI:15378"/>
        <dbReference type="ChEBI" id="CHEBI:17757"/>
        <dbReference type="ChEBI" id="CHEBI:57783"/>
        <dbReference type="ChEBI" id="CHEBI:58349"/>
        <dbReference type="ChEBI" id="CHEBI:62192"/>
    </reaction>
</comment>
<comment type="subunit">
    <text evidence="1">NDH is composed of at least 16 different subunits, 5 of which are encoded in the nucleus.</text>
</comment>
<comment type="subcellular location">
    <subcellularLocation>
        <location evidence="1">Plastid</location>
        <location evidence="1">Chloroplast thylakoid membrane</location>
        <topology evidence="1">Multi-pass membrane protein</topology>
    </subcellularLocation>
</comment>
<comment type="similarity">
    <text evidence="1">Belongs to the complex I subunit 3 family.</text>
</comment>
<keyword id="KW-0150">Chloroplast</keyword>
<keyword id="KW-0472">Membrane</keyword>
<keyword id="KW-0520">NAD</keyword>
<keyword id="KW-0521">NADP</keyword>
<keyword id="KW-0934">Plastid</keyword>
<keyword id="KW-0618">Plastoquinone</keyword>
<keyword id="KW-0874">Quinone</keyword>
<keyword id="KW-0793">Thylakoid</keyword>
<keyword id="KW-1278">Translocase</keyword>
<keyword id="KW-0812">Transmembrane</keyword>
<keyword id="KW-1133">Transmembrane helix</keyword>
<keyword id="KW-0813">Transport</keyword>
<evidence type="ECO:0000255" key="1">
    <source>
        <dbReference type="HAMAP-Rule" id="MF_01394"/>
    </source>
</evidence>
<proteinExistence type="inferred from homology"/>